<feature type="signal peptide" evidence="1">
    <location>
        <begin position="1"/>
        <end position="18"/>
    </location>
</feature>
<feature type="chain" id="PRO_5004522976" description="L-amino-acid oxidase 4">
    <location>
        <begin position="19"/>
        <end position="626"/>
    </location>
</feature>
<feature type="binding site" evidence="8 13 15 16">
    <location>
        <position position="75"/>
    </location>
    <ligand>
        <name>FAD</name>
        <dbReference type="ChEBI" id="CHEBI:57692"/>
    </ligand>
</feature>
<feature type="binding site" evidence="8 12 13 14 15 16">
    <location>
        <position position="94"/>
    </location>
    <ligand>
        <name>FAD</name>
        <dbReference type="ChEBI" id="CHEBI:57692"/>
    </ligand>
</feature>
<feature type="binding site" evidence="8 12 16">
    <location>
        <position position="95"/>
    </location>
    <ligand>
        <name>FAD</name>
        <dbReference type="ChEBI" id="CHEBI:57692"/>
    </ligand>
</feature>
<feature type="binding site" evidence="8 12 13 14 15 16">
    <location>
        <position position="102"/>
    </location>
    <ligand>
        <name>FAD</name>
        <dbReference type="ChEBI" id="CHEBI:57692"/>
    </ligand>
</feature>
<feature type="binding site" evidence="8 12 13 14 15 16">
    <location>
        <position position="122"/>
    </location>
    <ligand>
        <name>FAD</name>
        <dbReference type="ChEBI" id="CHEBI:57692"/>
    </ligand>
</feature>
<feature type="binding site" evidence="8 12 13 14 15 16">
    <location>
        <position position="123"/>
    </location>
    <ligand>
        <name>FAD</name>
        <dbReference type="ChEBI" id="CHEBI:57692"/>
    </ligand>
</feature>
<feature type="binding site" evidence="8">
    <location>
        <position position="123"/>
    </location>
    <ligand>
        <name>L-glutamate</name>
        <dbReference type="ChEBI" id="CHEBI:29985"/>
    </ligand>
</feature>
<feature type="binding site" evidence="8 13">
    <location>
        <position position="123"/>
    </location>
    <ligand>
        <name>L-glutamine</name>
        <dbReference type="ChEBI" id="CHEBI:58359"/>
    </ligand>
</feature>
<feature type="binding site" evidence="11 15">
    <location>
        <position position="123"/>
    </location>
    <ligand>
        <name>L-lysine</name>
        <dbReference type="ChEBI" id="CHEBI:32551"/>
    </ligand>
</feature>
<feature type="binding site" evidence="8 15">
    <location>
        <position position="123"/>
    </location>
    <ligand>
        <name>L-phenylalanine</name>
        <dbReference type="ChEBI" id="CHEBI:58095"/>
    </ligand>
</feature>
<feature type="binding site" evidence="8 12 13 14 15 16">
    <location>
        <position position="334"/>
    </location>
    <ligand>
        <name>FAD</name>
        <dbReference type="ChEBI" id="CHEBI:57692"/>
    </ligand>
</feature>
<feature type="binding site" evidence="8 14">
    <location>
        <position position="457"/>
    </location>
    <ligand>
        <name>L-glutamate</name>
        <dbReference type="ChEBI" id="CHEBI:29985"/>
    </ligand>
</feature>
<feature type="binding site" evidence="8 13">
    <location>
        <position position="457"/>
    </location>
    <ligand>
        <name>L-glutamine</name>
        <dbReference type="ChEBI" id="CHEBI:58359"/>
    </ligand>
</feature>
<feature type="binding site" evidence="11 15">
    <location>
        <position position="457"/>
    </location>
    <ligand>
        <name>L-lysine</name>
        <dbReference type="ChEBI" id="CHEBI:32551"/>
    </ligand>
</feature>
<feature type="binding site" evidence="8 15">
    <location>
        <position position="457"/>
    </location>
    <ligand>
        <name>L-phenylalanine</name>
        <dbReference type="ChEBI" id="CHEBI:58095"/>
    </ligand>
</feature>
<feature type="binding site" evidence="8 13 14 15 16">
    <location>
        <position position="551"/>
    </location>
    <ligand>
        <name>FAD</name>
        <dbReference type="ChEBI" id="CHEBI:57692"/>
    </ligand>
</feature>
<feature type="binding site" evidence="8 15">
    <location>
        <position position="558"/>
    </location>
    <ligand>
        <name>L-phenylalanine</name>
        <dbReference type="ChEBI" id="CHEBI:58095"/>
    </ligand>
</feature>
<feature type="binding site" evidence="8 12 14 15 16">
    <location>
        <position position="559"/>
    </location>
    <ligand>
        <name>FAD</name>
        <dbReference type="ChEBI" id="CHEBI:57692"/>
    </ligand>
</feature>
<feature type="binding site" evidence="8 12 13 14 15 16">
    <location>
        <position position="560"/>
    </location>
    <ligand>
        <name>FAD</name>
        <dbReference type="ChEBI" id="CHEBI:57692"/>
    </ligand>
</feature>
<feature type="glycosylation site" description="N-linked (GlcNAc...) asparagine" evidence="2 7">
    <location>
        <position position="54"/>
    </location>
</feature>
<feature type="glycosylation site" description="N-linked (GlcNAc...) asparagine" evidence="7">
    <location>
        <position position="164"/>
    </location>
</feature>
<feature type="glycosylation site" description="N-linked (GlcNAc...) asparagine" evidence="2 7">
    <location>
        <position position="193"/>
    </location>
</feature>
<feature type="glycosylation site" description="N-linked (GlcNAc...) asparagine" evidence="2 7">
    <location>
        <position position="331"/>
    </location>
</feature>
<feature type="mutagenesis site" description="Lowers the glycosylation rate of LAAO4, decreases greatly temperature stability, and decreases the catalytic activity." evidence="7">
    <original>N</original>
    <variation>A</variation>
    <location>
        <position position="54"/>
    </location>
</feature>
<feature type="mutagenesis site" description="Lowers the glycosylation rate of LAAO4, decreases greatly temperature stability, but does not affect the catalytic activity." evidence="7">
    <original>N</original>
    <variation>A</variation>
    <location>
        <position position="164"/>
    </location>
</feature>
<feature type="mutagenesis site" description="Lowers the glycosylation rate of LAAO4, decreases greatly temperature stability, but does not affect the catalytic activity." evidence="7">
    <original>N</original>
    <variation>A</variation>
    <location>
        <position position="193"/>
    </location>
</feature>
<feature type="mutagenesis site" description="Leads to a 2.1-fold increased activity toward L-tryptophan, an 1.6-fold increase in activity toward L-2-naphthylalanine which possesses an aromatic side chain of similar size compared with L-tryptophan, as well as a decreased activity for L-tyrosine." evidence="8">
    <original>E</original>
    <variation>H</variation>
    <location>
        <position position="288"/>
    </location>
</feature>
<feature type="mutagenesis site" description="Leads to an 1.8-fold increased activity toward L-tryptophan and a decreased activity for L-tyrosine." evidence="8">
    <original>E</original>
    <variation>S</variation>
    <location>
        <position position="288"/>
    </location>
</feature>
<feature type="mutagenesis site" description="Lowers the glycosylation rate of LAAO4, decreases greatly temperature stability, but does not affect the catalytic activity." evidence="7">
    <original>N</original>
    <variation>A</variation>
    <location>
        <position position="331"/>
    </location>
</feature>
<feature type="helix" evidence="17">
    <location>
        <begin position="62"/>
        <end position="64"/>
    </location>
</feature>
<feature type="strand" evidence="18">
    <location>
        <begin position="67"/>
        <end position="70"/>
    </location>
</feature>
<feature type="helix" evidence="18">
    <location>
        <begin position="74"/>
        <end position="85"/>
    </location>
</feature>
<feature type="strand" evidence="18">
    <location>
        <begin position="90"/>
        <end position="93"/>
    </location>
</feature>
<feature type="strand" evidence="18">
    <location>
        <begin position="95"/>
        <end position="97"/>
    </location>
</feature>
<feature type="strand" evidence="18">
    <location>
        <begin position="105"/>
        <end position="107"/>
    </location>
</feature>
<feature type="strand" evidence="18">
    <location>
        <begin position="116"/>
        <end position="120"/>
    </location>
</feature>
<feature type="strand" evidence="18">
    <location>
        <begin position="124"/>
        <end position="126"/>
    </location>
</feature>
<feature type="helix" evidence="18">
    <location>
        <begin position="141"/>
        <end position="149"/>
    </location>
</feature>
<feature type="helix" evidence="18">
    <location>
        <begin position="153"/>
        <end position="155"/>
    </location>
</feature>
<feature type="strand" evidence="18">
    <location>
        <begin position="156"/>
        <end position="158"/>
    </location>
</feature>
<feature type="strand" evidence="18">
    <location>
        <begin position="164"/>
        <end position="166"/>
    </location>
</feature>
<feature type="strand" evidence="18">
    <location>
        <begin position="169"/>
        <end position="172"/>
    </location>
</feature>
<feature type="strand" evidence="18">
    <location>
        <begin position="175"/>
        <end position="178"/>
    </location>
</feature>
<feature type="helix" evidence="18">
    <location>
        <begin position="187"/>
        <end position="190"/>
    </location>
</feature>
<feature type="helix" evidence="18">
    <location>
        <begin position="194"/>
        <end position="199"/>
    </location>
</feature>
<feature type="helix" evidence="18">
    <location>
        <begin position="201"/>
        <end position="222"/>
    </location>
</feature>
<feature type="helix" evidence="18">
    <location>
        <begin position="226"/>
        <end position="233"/>
    </location>
</feature>
<feature type="turn" evidence="18">
    <location>
        <begin position="234"/>
        <end position="236"/>
    </location>
</feature>
<feature type="helix" evidence="18">
    <location>
        <begin position="239"/>
        <end position="245"/>
    </location>
</feature>
<feature type="helix" evidence="18">
    <location>
        <begin position="251"/>
        <end position="253"/>
    </location>
</feature>
<feature type="helix" evidence="18">
    <location>
        <begin position="262"/>
        <end position="272"/>
    </location>
</feature>
<feature type="helix" evidence="18">
    <location>
        <begin position="277"/>
        <end position="279"/>
    </location>
</feature>
<feature type="helix" evidence="18">
    <location>
        <begin position="282"/>
        <end position="291"/>
    </location>
</feature>
<feature type="strand" evidence="18">
    <location>
        <begin position="296"/>
        <end position="298"/>
    </location>
</feature>
<feature type="strand" evidence="18">
    <location>
        <begin position="301"/>
        <end position="305"/>
    </location>
</feature>
<feature type="helix" evidence="18">
    <location>
        <begin position="311"/>
        <end position="320"/>
    </location>
</feature>
<feature type="turn" evidence="18">
    <location>
        <begin position="321"/>
        <end position="323"/>
    </location>
</feature>
<feature type="strand" evidence="18">
    <location>
        <begin position="334"/>
        <end position="340"/>
    </location>
</feature>
<feature type="strand" evidence="18">
    <location>
        <begin position="349"/>
        <end position="353"/>
    </location>
</feature>
<feature type="strand" evidence="18">
    <location>
        <begin position="356"/>
        <end position="365"/>
    </location>
</feature>
<feature type="helix" evidence="18">
    <location>
        <begin position="369"/>
        <end position="372"/>
    </location>
</feature>
<feature type="helix" evidence="17">
    <location>
        <begin position="378"/>
        <end position="380"/>
    </location>
</feature>
<feature type="helix" evidence="18">
    <location>
        <begin position="384"/>
        <end position="392"/>
    </location>
</feature>
<feature type="strand" evidence="18">
    <location>
        <begin position="398"/>
        <end position="407"/>
    </location>
</feature>
<feature type="helix" evidence="18">
    <location>
        <begin position="409"/>
        <end position="412"/>
    </location>
</feature>
<feature type="strand" evidence="18">
    <location>
        <begin position="427"/>
        <end position="432"/>
    </location>
</feature>
<feature type="strand" evidence="18">
    <location>
        <begin position="436"/>
        <end position="438"/>
    </location>
</feature>
<feature type="turn" evidence="18">
    <location>
        <begin position="442"/>
        <end position="445"/>
    </location>
</feature>
<feature type="strand" evidence="18">
    <location>
        <begin position="446"/>
        <end position="448"/>
    </location>
</feature>
<feature type="strand" evidence="18">
    <location>
        <begin position="452"/>
        <end position="459"/>
    </location>
</feature>
<feature type="helix" evidence="18">
    <location>
        <begin position="460"/>
        <end position="467"/>
    </location>
</feature>
<feature type="helix" evidence="18">
    <location>
        <begin position="475"/>
        <end position="493"/>
    </location>
</feature>
<feature type="helix" evidence="18">
    <location>
        <begin position="497"/>
        <end position="501"/>
    </location>
</feature>
<feature type="strand" evidence="18">
    <location>
        <begin position="504"/>
        <end position="511"/>
    </location>
</feature>
<feature type="helix" evidence="17">
    <location>
        <begin position="512"/>
        <end position="514"/>
    </location>
</feature>
<feature type="turn" evidence="18">
    <location>
        <begin position="516"/>
        <end position="518"/>
    </location>
</feature>
<feature type="strand" evidence="18">
    <location>
        <begin position="519"/>
        <end position="523"/>
    </location>
</feature>
<feature type="helix" evidence="18">
    <location>
        <begin position="529"/>
        <end position="532"/>
    </location>
</feature>
<feature type="helix" evidence="18">
    <location>
        <begin position="534"/>
        <end position="538"/>
    </location>
</feature>
<feature type="turn" evidence="18">
    <location>
        <begin position="542"/>
        <end position="545"/>
    </location>
</feature>
<feature type="strand" evidence="18">
    <location>
        <begin position="546"/>
        <end position="548"/>
    </location>
</feature>
<feature type="strand" evidence="18">
    <location>
        <begin position="553"/>
        <end position="556"/>
    </location>
</feature>
<feature type="helix" evidence="18">
    <location>
        <begin position="560"/>
        <end position="578"/>
    </location>
</feature>
<feature type="helix" evidence="18">
    <location>
        <begin position="580"/>
        <end position="582"/>
    </location>
</feature>
<feature type="helix" evidence="18">
    <location>
        <begin position="583"/>
        <end position="590"/>
    </location>
</feature>
<feature type="strand" evidence="18">
    <location>
        <begin position="592"/>
        <end position="596"/>
    </location>
</feature>
<keyword id="KW-0002">3D-structure</keyword>
<keyword id="KW-0274">FAD</keyword>
<keyword id="KW-0285">Flavoprotein</keyword>
<keyword id="KW-0325">Glycoprotein</keyword>
<keyword id="KW-0560">Oxidoreductase</keyword>
<keyword id="KW-0964">Secreted</keyword>
<keyword id="KW-0732">Signal</keyword>
<name>LAAO4_HEBCY</name>
<comment type="function">
    <text evidence="3 4 5 6 7 8">Catalyzes the oxidative deamination of L-amino acids with molecular oxygen to the corresponding alpha-keto acids and ammonia (PubMed:30631897, PubMed:32653636, PubMed:32852125, PubMed:33580695, PubMed:34459552, PubMed:39152524). L-glutamine shows the highest relative activity but LAAO4 has a broad substrate specificity, including L-amino acids with big aromatic, acidic and basic side chains (PubMed:33580695, PubMed:39152524). Methyl esters of these L-amino acids are also accepted, ethyl esters are converted but with lower activity, whereas D-Amino acids are not converted (PubMed:30631897). No reaction is detected for small polar amino acids such as L-cysteine or L-aspartate, and very little for small, branched hydrophobic amino acids like L-valine (PubMed:39152524).</text>
</comment>
<comment type="catalytic activity">
    <reaction evidence="3 4 5 6 7 8">
        <text>an L-alpha-amino acid + O2 + H2O = a 2-oxocarboxylate + H2O2 + NH4(+)</text>
        <dbReference type="Rhea" id="RHEA:13781"/>
        <dbReference type="ChEBI" id="CHEBI:15377"/>
        <dbReference type="ChEBI" id="CHEBI:15379"/>
        <dbReference type="ChEBI" id="CHEBI:16240"/>
        <dbReference type="ChEBI" id="CHEBI:28938"/>
        <dbReference type="ChEBI" id="CHEBI:35179"/>
        <dbReference type="ChEBI" id="CHEBI:59869"/>
        <dbReference type="EC" id="1.4.3.2"/>
    </reaction>
    <physiologicalReaction direction="left-to-right" evidence="3 4 5 6 7 8">
        <dbReference type="Rhea" id="RHEA:13782"/>
    </physiologicalReaction>
</comment>
<comment type="catalytic activity">
    <reaction evidence="3 5 8">
        <text>L-lysine + O2 + H2O = 6-amino-2-oxohexanoate + H2O2 + NH4(+)</text>
        <dbReference type="Rhea" id="RHEA:14437"/>
        <dbReference type="ChEBI" id="CHEBI:15377"/>
        <dbReference type="ChEBI" id="CHEBI:15379"/>
        <dbReference type="ChEBI" id="CHEBI:16240"/>
        <dbReference type="ChEBI" id="CHEBI:28938"/>
        <dbReference type="ChEBI" id="CHEBI:32551"/>
        <dbReference type="ChEBI" id="CHEBI:58183"/>
        <dbReference type="EC" id="1.4.3.14"/>
    </reaction>
    <physiologicalReaction direction="left-to-right" evidence="3 5 8">
        <dbReference type="Rhea" id="RHEA:14438"/>
    </physiologicalReaction>
</comment>
<comment type="catalytic activity">
    <reaction evidence="3 5 8">
        <text>L-glutamate + O2 + H2O = H2O2 + 2-oxoglutarate + NH4(+)</text>
        <dbReference type="Rhea" id="RHEA:20728"/>
        <dbReference type="ChEBI" id="CHEBI:15377"/>
        <dbReference type="ChEBI" id="CHEBI:15379"/>
        <dbReference type="ChEBI" id="CHEBI:16240"/>
        <dbReference type="ChEBI" id="CHEBI:16810"/>
        <dbReference type="ChEBI" id="CHEBI:28938"/>
        <dbReference type="ChEBI" id="CHEBI:29985"/>
        <dbReference type="EC" id="1.4.3.11"/>
    </reaction>
    <physiologicalReaction direction="left-to-right" evidence="3 5 8">
        <dbReference type="Rhea" id="RHEA:20729"/>
    </physiologicalReaction>
</comment>
<comment type="catalytic activity">
    <reaction evidence="3 5 8">
        <text>L-arginine + O2 + H2O = 5-guanidino-2-oxopentanoate + H2O2 + NH4(+)</text>
        <dbReference type="Rhea" id="RHEA:51404"/>
        <dbReference type="ChEBI" id="CHEBI:15377"/>
        <dbReference type="ChEBI" id="CHEBI:15379"/>
        <dbReference type="ChEBI" id="CHEBI:16240"/>
        <dbReference type="ChEBI" id="CHEBI:28938"/>
        <dbReference type="ChEBI" id="CHEBI:32682"/>
        <dbReference type="ChEBI" id="CHEBI:58489"/>
        <dbReference type="EC" id="1.4.3.25"/>
    </reaction>
    <physiologicalReaction direction="left-to-right" evidence="3 5 8">
        <dbReference type="Rhea" id="RHEA:51405"/>
    </physiologicalReaction>
</comment>
<comment type="catalytic activity">
    <reaction evidence="3 5 7 8">
        <text>L-leucine + O2 + H2O = 4-methyl-2-oxopentanoate + H2O2 + NH4(+)</text>
        <dbReference type="Rhea" id="RHEA:60996"/>
        <dbReference type="ChEBI" id="CHEBI:15377"/>
        <dbReference type="ChEBI" id="CHEBI:15379"/>
        <dbReference type="ChEBI" id="CHEBI:16240"/>
        <dbReference type="ChEBI" id="CHEBI:17865"/>
        <dbReference type="ChEBI" id="CHEBI:28938"/>
        <dbReference type="ChEBI" id="CHEBI:57427"/>
    </reaction>
    <physiologicalReaction direction="left-to-right" evidence="3 5 7 8">
        <dbReference type="Rhea" id="RHEA:60997"/>
    </physiologicalReaction>
</comment>
<comment type="catalytic activity">
    <reaction evidence="3 5 8">
        <text>L-asparagine + O2 + H2O = 2-oxosuccinamate + H2O2 + NH4(+)</text>
        <dbReference type="Rhea" id="RHEA:61224"/>
        <dbReference type="ChEBI" id="CHEBI:15377"/>
        <dbReference type="ChEBI" id="CHEBI:15379"/>
        <dbReference type="ChEBI" id="CHEBI:16240"/>
        <dbReference type="ChEBI" id="CHEBI:28938"/>
        <dbReference type="ChEBI" id="CHEBI:57735"/>
        <dbReference type="ChEBI" id="CHEBI:58048"/>
    </reaction>
    <physiologicalReaction direction="left-to-right" evidence="3 5 8">
        <dbReference type="Rhea" id="RHEA:61225"/>
    </physiologicalReaction>
</comment>
<comment type="catalytic activity">
    <reaction evidence="3 5 8">
        <text>L-histidine + O2 + H2O = 3-(imidazol-5-yl)pyruvate + H2O2 + NH4(+)</text>
        <dbReference type="Rhea" id="RHEA:61228"/>
        <dbReference type="ChEBI" id="CHEBI:15377"/>
        <dbReference type="ChEBI" id="CHEBI:15379"/>
        <dbReference type="ChEBI" id="CHEBI:16240"/>
        <dbReference type="ChEBI" id="CHEBI:28938"/>
        <dbReference type="ChEBI" id="CHEBI:57595"/>
        <dbReference type="ChEBI" id="CHEBI:58133"/>
    </reaction>
    <physiologicalReaction direction="left-to-right" evidence="3 5 8">
        <dbReference type="Rhea" id="RHEA:61229"/>
    </physiologicalReaction>
</comment>
<comment type="catalytic activity">
    <reaction evidence="3 5 8">
        <text>L-isoleucine + O2 + H2O = (S)-3-methyl-2-oxopentanoate + H2O2 + NH4(+)</text>
        <dbReference type="Rhea" id="RHEA:61232"/>
        <dbReference type="ChEBI" id="CHEBI:15377"/>
        <dbReference type="ChEBI" id="CHEBI:15379"/>
        <dbReference type="ChEBI" id="CHEBI:16240"/>
        <dbReference type="ChEBI" id="CHEBI:28938"/>
        <dbReference type="ChEBI" id="CHEBI:35146"/>
        <dbReference type="ChEBI" id="CHEBI:58045"/>
    </reaction>
    <physiologicalReaction direction="left-to-right" evidence="3 5 8">
        <dbReference type="Rhea" id="RHEA:61233"/>
    </physiologicalReaction>
</comment>
<comment type="catalytic activity">
    <reaction evidence="3 5 8">
        <text>L-methionine + O2 + H2O = 4-methylsulfanyl-2-oxobutanoate + H2O2 + NH4(+)</text>
        <dbReference type="Rhea" id="RHEA:61236"/>
        <dbReference type="ChEBI" id="CHEBI:15377"/>
        <dbReference type="ChEBI" id="CHEBI:15379"/>
        <dbReference type="ChEBI" id="CHEBI:16240"/>
        <dbReference type="ChEBI" id="CHEBI:16723"/>
        <dbReference type="ChEBI" id="CHEBI:28938"/>
        <dbReference type="ChEBI" id="CHEBI:57844"/>
    </reaction>
    <physiologicalReaction direction="left-to-right" evidence="3 5 8">
        <dbReference type="Rhea" id="RHEA:61237"/>
    </physiologicalReaction>
</comment>
<comment type="catalytic activity">
    <reaction evidence="3 4 8">
        <text>L-phenylalanine + O2 + H2O = 3-phenylpyruvate + H2O2 + NH4(+)</text>
        <dbReference type="Rhea" id="RHEA:61240"/>
        <dbReference type="ChEBI" id="CHEBI:15377"/>
        <dbReference type="ChEBI" id="CHEBI:15379"/>
        <dbReference type="ChEBI" id="CHEBI:16240"/>
        <dbReference type="ChEBI" id="CHEBI:18005"/>
        <dbReference type="ChEBI" id="CHEBI:28938"/>
        <dbReference type="ChEBI" id="CHEBI:58095"/>
    </reaction>
    <physiologicalReaction direction="left-to-right" evidence="3 5 8">
        <dbReference type="Rhea" id="RHEA:61241"/>
    </physiologicalReaction>
</comment>
<comment type="catalytic activity">
    <reaction evidence="3 5 8">
        <text>L-tyrosine + O2 + H2O = 3-(4-hydroxyphenyl)pyruvate + H2O2 + NH4(+)</text>
        <dbReference type="Rhea" id="RHEA:61248"/>
        <dbReference type="ChEBI" id="CHEBI:15377"/>
        <dbReference type="ChEBI" id="CHEBI:15379"/>
        <dbReference type="ChEBI" id="CHEBI:16240"/>
        <dbReference type="ChEBI" id="CHEBI:28938"/>
        <dbReference type="ChEBI" id="CHEBI:36242"/>
        <dbReference type="ChEBI" id="CHEBI:58315"/>
    </reaction>
    <physiologicalReaction direction="left-to-right" evidence="3 5 8">
        <dbReference type="Rhea" id="RHEA:61249"/>
    </physiologicalReaction>
</comment>
<comment type="catalytic activity">
    <reaction evidence="3 5 7 8">
        <text>L-glutamine + O2 + H2O = 2-oxoglutaramate + H2O2 + NH4(+)</text>
        <dbReference type="Rhea" id="RHEA:61260"/>
        <dbReference type="ChEBI" id="CHEBI:15377"/>
        <dbReference type="ChEBI" id="CHEBI:15379"/>
        <dbReference type="ChEBI" id="CHEBI:16240"/>
        <dbReference type="ChEBI" id="CHEBI:16769"/>
        <dbReference type="ChEBI" id="CHEBI:28938"/>
        <dbReference type="ChEBI" id="CHEBI:58359"/>
    </reaction>
    <physiologicalReaction direction="left-to-right" evidence="3 5 7 8">
        <dbReference type="Rhea" id="RHEA:61261"/>
    </physiologicalReaction>
</comment>
<comment type="catalytic activity">
    <reaction evidence="3 5 7 8">
        <text>L-alanine + O2 + H2O = pyruvate + H2O2 + NH4(+)</text>
        <dbReference type="Rhea" id="RHEA:61264"/>
        <dbReference type="ChEBI" id="CHEBI:15361"/>
        <dbReference type="ChEBI" id="CHEBI:15377"/>
        <dbReference type="ChEBI" id="CHEBI:15379"/>
        <dbReference type="ChEBI" id="CHEBI:16240"/>
        <dbReference type="ChEBI" id="CHEBI:28938"/>
        <dbReference type="ChEBI" id="CHEBI:57972"/>
    </reaction>
    <physiologicalReaction direction="left-to-right" evidence="3 5 7 8">
        <dbReference type="Rhea" id="RHEA:61265"/>
    </physiologicalReaction>
</comment>
<comment type="cofactor">
    <cofactor evidence="6 8">
        <name>FAD</name>
        <dbReference type="ChEBI" id="CHEBI:57692"/>
    </cofactor>
</comment>
<comment type="activity regulation">
    <text evidence="3 5 7">LAAO4 is activated by exposure to acidic pH, the detergent sodium dodecyl sulfate, or freezing.</text>
</comment>
<comment type="biophysicochemical properties">
    <kinetics>
        <KM evidence="3 5">0.46 mM for L-glutamine (untreated)</KM>
        <KM evidence="3 5">0.56 mM for L-glutamine (after acid activation)</KM>
        <KM evidence="3 5">0.27 mM for L-leucine (untreated)</KM>
        <KM evidence="3 5">0.26 mM for L-leucine (after acid activation)</KM>
        <KM evidence="3 5">0.26 mM for L-phenylalanine (untreated)</KM>
        <KM evidence="3 5">0.48 mM for L-phenylalanine (after acid activation)</KM>
        <KM evidence="5">0.16 mM for L-methionine (untreated)</KM>
        <KM evidence="5">0.41 mM for L-methionine (after acid activation)</KM>
        <KM evidence="3 5">0.69 mM for L-leucine methyl ester (untreated)</KM>
        <KM evidence="3 5">0.67 mM for L-leucine methyl ester (after acid activation)</KM>
        <KM evidence="5">1.85 mM for L-phenylalanine methyl ester (untreated)</KM>
        <KM evidence="5">1.12 mM for L-phenylalanine methyl ester (after acid activation)</KM>
        <Vmax evidence="3 5">2.22 umol/min/mg enzyme towards L-glutamine (untreated)</Vmax>
        <Vmax evidence="3 5">33.6 umol/min/mg enzyme towards L-glutamine (after acid activation)</Vmax>
        <Vmax evidence="3 5">2.01 umol/min/mg enzyme towards L-leucine (untreated)</Vmax>
        <Vmax evidence="3 5">39.2 umol/min/mg enzyme towards L-leucine (after acid activation)</Vmax>
        <Vmax evidence="3 5">0.72 umol/min/mg enzyme towards L-phenylalanine (untreated)</Vmax>
        <Vmax evidence="3 5">18.9 umol/min/mg enzyme towards L-phenylalanine (after acid activation)</Vmax>
        <Vmax evidence="5">5.98 umol/min/mg enzyme towards L-methionine (untreated)</Vmax>
        <Vmax evidence="5">14.318 umol/min/mg enzyme towards L-methionine (after acid activation)</Vmax>
        <Vmax evidence="3 5">2.25 umol/min/mg enzyme towards L-leucine methyl ester (untreated)</Vmax>
        <Vmax evidence="3 5">24.1 umol/min/mg enzyme towards L-leucine methyl ester (after acid activation)</Vmax>
        <Vmax evidence="5">2.86 umol/min/mg enzyme towards L-leucine methyl ester (untreated)</Vmax>
        <Vmax evidence="5">9.21 umol/min/mg enzyme towards L-leucine methyl ester (after acid activation)</Vmax>
    </kinetics>
    <phDependence>
        <text evidence="3 5">Optimum pH is 6.0 to 8.0.</text>
    </phDependence>
</comment>
<comment type="subunit">
    <text evidence="8">Homodimer.</text>
</comment>
<comment type="subcellular location">
    <subcellularLocation>
        <location evidence="10">Secreted</location>
    </subcellularLocation>
</comment>
<comment type="PTM">
    <text evidence="7">Out of the 4 glycosylated residues, Asn-54 is hypermannosylated (PubMed:34459552). The presence of a hypermannosylated N-glycan on Asn-54 leads to adoption of a more active conformation in the absence of acid activation (PubMed:34459552).</text>
</comment>
<comment type="biotechnology">
    <text evidence="6">Ammonia is critical for agricultural and chemical industries. The extracellular production of ammonia by yeast (Saccharomyces cerevisiae) expressing LAAO4 can be efficient approach because yeast can avoid growth deficiencies caused by knockout of genes for ammonia assimilation. Moreover, LAAO4 is able to produce ammonia from food processing waste, soybean residues (okara) derived from tofu production, demonstrating that ammonia production by LAAO4 is a promising strategy to utilize food processing wastes.</text>
</comment>
<comment type="similarity">
    <text evidence="1">Belongs to the flavin monoamine oxidase family. FIG1 subfamily.</text>
</comment>
<accession>S4S6Z0</accession>
<protein>
    <recommendedName>
        <fullName evidence="9">L-amino-acid oxidase 4</fullName>
        <shortName evidence="9">LAAO4</shortName>
        <ecNumber evidence="3 5 7 8">1.4.3.-</ecNumber>
        <ecNumber evidence="3 5 8">1.4.3.11</ecNumber>
        <ecNumber evidence="3 5 8">1.4.3.14</ecNumber>
        <ecNumber evidence="3 4 5 6 7 8">1.4.3.2</ecNumber>
        <ecNumber evidence="3 5 8">1.4.3.25</ecNumber>
    </recommendedName>
</protein>
<proteinExistence type="evidence at protein level"/>
<reference key="1">
    <citation type="submission" date="2011-08" db="EMBL/GenBank/DDBJ databases">
        <title>Evolutionary analyses of three subfamilies of eukaryotic L-amino acid oxidases.</title>
        <authorList>
            <person name="Nuutinen J.T."/>
            <person name="Marttinen E."/>
            <person name="Timonen S."/>
        </authorList>
    </citation>
    <scope>NUCLEOTIDE SEQUENCE [MRNA]</scope>
    <source>
        <strain>H7</strain>
        <tissue>Mycelium</tissue>
    </source>
</reference>
<reference key="2">
    <citation type="journal article" date="2019" name="Appl. Microbiol. Biotechnol.">
        <title>Expression, characterization, and site-specific covalent immobilization of an L-amino acid oxidase from the fungus Hebeloma cylindrosporum.</title>
        <authorList>
            <person name="Bloess S."/>
            <person name="Beuel T."/>
            <person name="Krueger T."/>
            <person name="Sewald N."/>
            <person name="Dierks T."/>
            <person name="Fischer von Mollard G."/>
        </authorList>
    </citation>
    <scope>FUNCTION</scope>
    <scope>CATALYTIC ACTIVITY</scope>
    <scope>BIOPHYSICOCHEMICAL PROPERTIES</scope>
    <scope>SUBSTRATE SPECIFICITY</scope>
    <scope>ACTIVITY REGULATION</scope>
</reference>
<reference key="3">
    <citation type="journal article" date="2020" name="J. Biotechnol.">
        <title>Process properties of an l-amino acid oxidase from Hebeloma cylindrosporum for the synthesis of phenylpyruvic acid from l-phenylalanine.</title>
        <authorList>
            <person name="Oike K."/>
            <person name="Groeger H."/>
        </authorList>
    </citation>
    <scope>FUNCTION</scope>
    <scope>CATALYTIC ACTIVITY</scope>
</reference>
<reference key="4">
    <citation type="journal article" date="2020" name="MicrobiologyOpen">
        <title>Recombinant expression of an l-amino acid oxidase from the fungus Hebeloma cylindrosporum in Pichia pastoris including fermentation.</title>
        <authorList>
            <person name="Hess M.C."/>
            <person name="Bloess S."/>
            <person name="Risse J.M."/>
            <person name="Friehs K."/>
            <person name="Fischer von Mollard G."/>
        </authorList>
    </citation>
    <scope>FUNCTION</scope>
    <scope>CATALYTIC ACTIVITY</scope>
    <scope>BIOPHYSICOCHEMICAL PROPERTIES</scope>
    <scope>ACTIVITY REGULATION</scope>
    <scope>GLYCOSYLATION</scope>
</reference>
<reference key="5">
    <citation type="journal article" date="2021" name="Biosci. Biotechnol. Biochem.">
        <title>Improved ammonia production from soybean residues by cell surface-displayed l-amino acid oxidase on yeast.</title>
        <authorList>
            <person name="Watanabe Y."/>
            <person name="Aoki W."/>
            <person name="Ueda M."/>
        </authorList>
    </citation>
    <scope>FUNCTION</scope>
    <scope>COFACTOR</scope>
    <scope>CATALYTIC ACTIVITY</scope>
    <scope>BIOTECHNOLOGY</scope>
</reference>
<reference key="6">
    <citation type="journal article" date="2021" name="MicrobiologyOpen">
        <title>Analysis of N-glycosylation in fungal l-amino acid oxidases expressed in the methylotrophic yeast Pichia pastoris.</title>
        <authorList>
            <person name="Hess M.C."/>
            <person name="Grollius M."/>
            <person name="Duhay V."/>
            <person name="Koopmeiners S."/>
            <person name="Bloess S."/>
            <person name="Fischer von Mollard G."/>
        </authorList>
    </citation>
    <scope>FUNCTION</scope>
    <scope>CATALYTIC ACTIVITY</scope>
    <scope>ACTIVITY REGULATION</scope>
    <scope>GLYCOSYLATION AT ASN-54; ASN-164; ASN-193 AND ASN-331</scope>
    <scope>MUTAGENESIS OF ASN-54; ASN-164; ASN-193 AND ASN-331</scope>
</reference>
<reference evidence="12 13 14 15 16" key="7">
    <citation type="journal article" date="2024" name="FEBS Lett.">
        <title>Crystal structure and enzyme engineering of the broad substrate spectrum l-amino acid oxidase 4 from the fungus Hebeloma cylindrosporum.</title>
        <authorList>
            <person name="Koopmeiners S."/>
            <person name="Gilzer D."/>
            <person name="Widmann C."/>
            <person name="Berelsmann N."/>
            <person name="Spross J."/>
            <person name="Niemann H.H."/>
            <person name="Fischer von Mollard G."/>
        </authorList>
    </citation>
    <scope>X-RAY CRYSTALLOGRAPHY (1.80 ANGSTROMS) IN COMPLEX WITH FAD; L-GLUTAMINE; L-GLUTAMIC ACID</scope>
    <scope>L-PHENYLALANIN AND N-ACETYL-L-LYSINE</scope>
    <scope>SUBUNIT</scope>
    <scope>FUNCTION</scope>
    <scope>CATALYTIC ACTIVITY</scope>
    <scope>SUBSTRATE SPECIFICITY</scope>
    <scope>COFACTOR</scope>
    <scope>MUTAGENESIS OF GLU-288</scope>
</reference>
<organism>
    <name type="scientific">Hebeloma cylindrosporum</name>
    <dbReference type="NCBI Taxonomy" id="76867"/>
    <lineage>
        <taxon>Eukaryota</taxon>
        <taxon>Fungi</taxon>
        <taxon>Dikarya</taxon>
        <taxon>Basidiomycota</taxon>
        <taxon>Agaricomycotina</taxon>
        <taxon>Agaricomycetes</taxon>
        <taxon>Agaricomycetidae</taxon>
        <taxon>Agaricales</taxon>
        <taxon>Agaricineae</taxon>
        <taxon>Hymenogastraceae</taxon>
        <taxon>Hebeloma</taxon>
    </lineage>
</organism>
<dbReference type="EC" id="1.4.3.-" evidence="3 5 7 8"/>
<dbReference type="EC" id="1.4.3.11" evidence="3 5 8"/>
<dbReference type="EC" id="1.4.3.14" evidence="3 5 8"/>
<dbReference type="EC" id="1.4.3.2" evidence="3 4 5 6 7 8"/>
<dbReference type="EC" id="1.4.3.25" evidence="3 5 8"/>
<dbReference type="EMBL" id="JN622028">
    <property type="protein sequence ID" value="AFA35113.1"/>
    <property type="molecule type" value="mRNA"/>
</dbReference>
<dbReference type="PDB" id="9ENH">
    <property type="method" value="X-ray"/>
    <property type="resolution" value="2.30 A"/>
    <property type="chains" value="A/B/C/D=54-615"/>
</dbReference>
<dbReference type="PDB" id="9ENI">
    <property type="method" value="X-ray"/>
    <property type="resolution" value="2.10 A"/>
    <property type="chains" value="A/B/C/D=54-615"/>
</dbReference>
<dbReference type="PDB" id="9ENJ">
    <property type="method" value="X-ray"/>
    <property type="resolution" value="2.10 A"/>
    <property type="chains" value="A/B/C/D=54-615"/>
</dbReference>
<dbReference type="PDB" id="9ENK">
    <property type="method" value="X-ray"/>
    <property type="resolution" value="2.20 A"/>
    <property type="chains" value="A/B/C/D=54-615"/>
</dbReference>
<dbReference type="PDB" id="9ENN">
    <property type="method" value="X-ray"/>
    <property type="resolution" value="1.80 A"/>
    <property type="chains" value="A/B/C/D=54-615"/>
</dbReference>
<dbReference type="PDBsum" id="9ENH"/>
<dbReference type="PDBsum" id="9ENI"/>
<dbReference type="PDBsum" id="9ENJ"/>
<dbReference type="PDBsum" id="9ENK"/>
<dbReference type="PDBsum" id="9ENN"/>
<dbReference type="SMR" id="S4S6Z0"/>
<dbReference type="GO" id="GO:0005576">
    <property type="term" value="C:extracellular region"/>
    <property type="evidence" value="ECO:0007669"/>
    <property type="project" value="UniProtKB-SubCell"/>
</dbReference>
<dbReference type="GO" id="GO:0001716">
    <property type="term" value="F:L-amino-acid oxidase activity"/>
    <property type="evidence" value="ECO:0007669"/>
    <property type="project" value="TreeGrafter"/>
</dbReference>
<dbReference type="GO" id="GO:0009063">
    <property type="term" value="P:amino acid catabolic process"/>
    <property type="evidence" value="ECO:0007669"/>
    <property type="project" value="TreeGrafter"/>
</dbReference>
<dbReference type="Gene3D" id="1.10.10.1620">
    <property type="match status" value="1"/>
</dbReference>
<dbReference type="Gene3D" id="3.90.660.10">
    <property type="match status" value="1"/>
</dbReference>
<dbReference type="Gene3D" id="3.50.50.60">
    <property type="entry name" value="FAD/NAD(P)-binding domain"/>
    <property type="match status" value="1"/>
</dbReference>
<dbReference type="InterPro" id="IPR002937">
    <property type="entry name" value="Amino_oxidase"/>
</dbReference>
<dbReference type="InterPro" id="IPR036188">
    <property type="entry name" value="FAD/NAD-bd_sf"/>
</dbReference>
<dbReference type="InterPro" id="IPR050281">
    <property type="entry name" value="Flavin_monoamine_oxidase"/>
</dbReference>
<dbReference type="PANTHER" id="PTHR10742:SF342">
    <property type="entry name" value="AMINE OXIDASE"/>
    <property type="match status" value="1"/>
</dbReference>
<dbReference type="PANTHER" id="PTHR10742">
    <property type="entry name" value="FLAVIN MONOAMINE OXIDASE"/>
    <property type="match status" value="1"/>
</dbReference>
<dbReference type="Pfam" id="PF01593">
    <property type="entry name" value="Amino_oxidase"/>
    <property type="match status" value="1"/>
</dbReference>
<dbReference type="SUPFAM" id="SSF54373">
    <property type="entry name" value="FAD-linked reductases, C-terminal domain"/>
    <property type="match status" value="1"/>
</dbReference>
<dbReference type="SUPFAM" id="SSF51905">
    <property type="entry name" value="FAD/NAD(P)-binding domain"/>
    <property type="match status" value="1"/>
</dbReference>
<sequence length="626" mass="69306">KSFFRSLVAASLVIVSYSADTTSVPFDAESRDQIFQHHARSVISGYTNTLGEKNISVPSSPPGGERVGILGAGIGGLYSALILQSLDVPFEIIEASNRVGGRLFTHKFPNGGKYDYYDVGAMRYPLPKSDDKGNYQPGVMQRVGQLFTYLGMHKQLIPYYFKSNKSPGFQYFNGVRARIGEGSSFDAPALGINSSLIDIGVTKIVNDAVGPFAQALFDDLQKHTTTGWDDMMKNDAYSTRSYFSFKYLPSPSFGLPSEHFSTRVINWLETFDKSTGWYDRGLTETVLEAIAFGEVGDGEVDWRCIDGGSHVLPDTIAAFLHKKGGNAFVMNASVTAIGLENPNKEDSPMVVVAGGQKRKYSHVISTLPLPVLRTVDLKNSKLDIVQSNALRKLQYGPSIKIGILFKEPWWTTGQDKNGEKFDLVGGQSYTDLPIRTVVYPSYGVNTNAPSNTLIASYCWTNDAERMGSLIGTGKKTYEEQLEHLVLSNLAAVHNTDYQYLKDRLVDVHSWDWNHNPLTMGAFAFFGPGDFQDLYTSLNRPAANGKLHFAGEALSVRHAWVVGALDSAWRAVYNYLYVTDPAKLPKFFELWGKNAEWFEQPGDGKEPNSDNSLLEKFVRRTHGTVSV</sequence>
<evidence type="ECO:0000255" key="1"/>
<evidence type="ECO:0000255" key="2">
    <source>
        <dbReference type="PROSITE-ProRule" id="PRU00498"/>
    </source>
</evidence>
<evidence type="ECO:0000269" key="3">
    <source>
    </source>
</evidence>
<evidence type="ECO:0000269" key="4">
    <source>
    </source>
</evidence>
<evidence type="ECO:0000269" key="5">
    <source>
    </source>
</evidence>
<evidence type="ECO:0000269" key="6">
    <source>
    </source>
</evidence>
<evidence type="ECO:0000269" key="7">
    <source>
    </source>
</evidence>
<evidence type="ECO:0000269" key="8">
    <source>
    </source>
</evidence>
<evidence type="ECO:0000303" key="9">
    <source>
    </source>
</evidence>
<evidence type="ECO:0000305" key="10"/>
<evidence type="ECO:0000305" key="11">
    <source>
    </source>
</evidence>
<evidence type="ECO:0007744" key="12">
    <source>
        <dbReference type="PDB" id="9ENH"/>
    </source>
</evidence>
<evidence type="ECO:0007744" key="13">
    <source>
        <dbReference type="PDB" id="9ENI"/>
    </source>
</evidence>
<evidence type="ECO:0007744" key="14">
    <source>
        <dbReference type="PDB" id="9ENJ"/>
    </source>
</evidence>
<evidence type="ECO:0007744" key="15">
    <source>
        <dbReference type="PDB" id="9ENK"/>
    </source>
</evidence>
<evidence type="ECO:0007744" key="16">
    <source>
        <dbReference type="PDB" id="9ENN"/>
    </source>
</evidence>
<evidence type="ECO:0007829" key="17">
    <source>
        <dbReference type="PDB" id="9ENH"/>
    </source>
</evidence>
<evidence type="ECO:0007829" key="18">
    <source>
        <dbReference type="PDB" id="9ENN"/>
    </source>
</evidence>